<evidence type="ECO:0000250" key="1"/>
<evidence type="ECO:0000255" key="2"/>
<evidence type="ECO:0000305" key="3"/>
<reference key="1">
    <citation type="journal article" date="2005" name="Nature">
        <title>Genome sequencing and analysis of Aspergillus oryzae.</title>
        <authorList>
            <person name="Machida M."/>
            <person name="Asai K."/>
            <person name="Sano M."/>
            <person name="Tanaka T."/>
            <person name="Kumagai T."/>
            <person name="Terai G."/>
            <person name="Kusumoto K."/>
            <person name="Arima T."/>
            <person name="Akita O."/>
            <person name="Kashiwagi Y."/>
            <person name="Abe K."/>
            <person name="Gomi K."/>
            <person name="Horiuchi H."/>
            <person name="Kitamoto K."/>
            <person name="Kobayashi T."/>
            <person name="Takeuchi M."/>
            <person name="Denning D.W."/>
            <person name="Galagan J.E."/>
            <person name="Nierman W.C."/>
            <person name="Yu J."/>
            <person name="Archer D.B."/>
            <person name="Bennett J.W."/>
            <person name="Bhatnagar D."/>
            <person name="Cleveland T.E."/>
            <person name="Fedorova N.D."/>
            <person name="Gotoh O."/>
            <person name="Horikawa H."/>
            <person name="Hosoyama A."/>
            <person name="Ichinomiya M."/>
            <person name="Igarashi R."/>
            <person name="Iwashita K."/>
            <person name="Juvvadi P.R."/>
            <person name="Kato M."/>
            <person name="Kato Y."/>
            <person name="Kin T."/>
            <person name="Kokubun A."/>
            <person name="Maeda H."/>
            <person name="Maeyama N."/>
            <person name="Maruyama J."/>
            <person name="Nagasaki H."/>
            <person name="Nakajima T."/>
            <person name="Oda K."/>
            <person name="Okada K."/>
            <person name="Paulsen I."/>
            <person name="Sakamoto K."/>
            <person name="Sawano T."/>
            <person name="Takahashi M."/>
            <person name="Takase K."/>
            <person name="Terabayashi Y."/>
            <person name="Wortman J.R."/>
            <person name="Yamada O."/>
            <person name="Yamagata Y."/>
            <person name="Anazawa H."/>
            <person name="Hata Y."/>
            <person name="Koide Y."/>
            <person name="Komori T."/>
            <person name="Koyama Y."/>
            <person name="Minetoki T."/>
            <person name="Suharnan S."/>
            <person name="Tanaka A."/>
            <person name="Isono K."/>
            <person name="Kuhara S."/>
            <person name="Ogasawara N."/>
            <person name="Kikuchi H."/>
        </authorList>
    </citation>
    <scope>NUCLEOTIDE SEQUENCE [LARGE SCALE GENOMIC DNA]</scope>
    <source>
        <strain>ATCC 42149 / RIB 40</strain>
    </source>
</reference>
<comment type="function">
    <text evidence="1">Pectinolytic enzymes consist of four classes of enzymes: pectine lyase, polygalacturonase, pectin methylesterase and rhamnogalacturonase. Hydrolyzes alpha-D-galacturonopyranosyl-(1,2)-alpha-L-rhamnopyranosyl linkages in the backbone of the hairy regions of pectins (By similarity).</text>
</comment>
<comment type="catalytic activity">
    <reaction>
        <text>Endohydrolysis of alpha-D-GalA-(1-&gt;2)-alpha-L-Rha glycosidic bond in the rhamnogalacturonan I backbone with initial inversion of anomeric configuration releasing oligosaccharides with beta-D-GalA at the reducing end.</text>
        <dbReference type="EC" id="3.2.1.171"/>
    </reaction>
</comment>
<comment type="subcellular location">
    <subcellularLocation>
        <location evidence="1">Secreted</location>
    </subcellularLocation>
</comment>
<comment type="similarity">
    <text evidence="3">Belongs to the glycosyl hydrolase 28 family.</text>
</comment>
<dbReference type="EC" id="3.2.1.171"/>
<dbReference type="EMBL" id="BA000054">
    <property type="protein sequence ID" value="BAE64322.1"/>
    <property type="molecule type" value="Genomic_DNA"/>
</dbReference>
<dbReference type="RefSeq" id="XP_001825455.1">
    <property type="nucleotide sequence ID" value="XM_001825403.1"/>
</dbReference>
<dbReference type="SMR" id="Q2U293"/>
<dbReference type="STRING" id="510516.Q2U293"/>
<dbReference type="CAZy" id="GH28">
    <property type="family name" value="Glycoside Hydrolase Family 28"/>
</dbReference>
<dbReference type="GlyCosmos" id="Q2U293">
    <property type="glycosylation" value="3 sites, No reported glycans"/>
</dbReference>
<dbReference type="EnsemblFungi" id="BAE64322">
    <property type="protein sequence ID" value="BAE64322"/>
    <property type="gene ID" value="AO090038000552"/>
</dbReference>
<dbReference type="GeneID" id="5997550"/>
<dbReference type="KEGG" id="aor:AO090038000552"/>
<dbReference type="VEuPathDB" id="FungiDB:AO090038000552"/>
<dbReference type="HOGENOM" id="CLU_016031_7_2_1"/>
<dbReference type="OMA" id="QSKDCRN"/>
<dbReference type="OrthoDB" id="108300at5052"/>
<dbReference type="Proteomes" id="UP000006564">
    <property type="component" value="Chromosome 6"/>
</dbReference>
<dbReference type="GO" id="GO:0005576">
    <property type="term" value="C:extracellular region"/>
    <property type="evidence" value="ECO:0007669"/>
    <property type="project" value="UniProtKB-SubCell"/>
</dbReference>
<dbReference type="GO" id="GO:0004650">
    <property type="term" value="F:polygalacturonase activity"/>
    <property type="evidence" value="ECO:0007669"/>
    <property type="project" value="InterPro"/>
</dbReference>
<dbReference type="GO" id="GO:0046576">
    <property type="term" value="F:rhamnogalacturonan alpha-L-rhamnopyranosyl-(1-&gt;4)-alpha-D-galactopyranosyluronide lyase activity"/>
    <property type="evidence" value="ECO:0000250"/>
    <property type="project" value="UniProtKB"/>
</dbReference>
<dbReference type="GO" id="GO:0071555">
    <property type="term" value="P:cell wall organization"/>
    <property type="evidence" value="ECO:0007669"/>
    <property type="project" value="UniProtKB-KW"/>
</dbReference>
<dbReference type="GO" id="GO:0045490">
    <property type="term" value="P:pectin catabolic process"/>
    <property type="evidence" value="ECO:0000250"/>
    <property type="project" value="UniProtKB"/>
</dbReference>
<dbReference type="FunFam" id="2.160.20.10:FF:000025">
    <property type="entry name" value="Probable rhamnogalacturonase B"/>
    <property type="match status" value="1"/>
</dbReference>
<dbReference type="Gene3D" id="2.160.20.10">
    <property type="entry name" value="Single-stranded right-handed beta-helix, Pectin lyase-like"/>
    <property type="match status" value="1"/>
</dbReference>
<dbReference type="InterPro" id="IPR000743">
    <property type="entry name" value="Glyco_hydro_28"/>
</dbReference>
<dbReference type="InterPro" id="IPR012334">
    <property type="entry name" value="Pectin_lyas_fold"/>
</dbReference>
<dbReference type="InterPro" id="IPR011050">
    <property type="entry name" value="Pectin_lyase_fold/virulence"/>
</dbReference>
<dbReference type="PANTHER" id="PTHR31736">
    <property type="match status" value="1"/>
</dbReference>
<dbReference type="PANTHER" id="PTHR31736:SF19">
    <property type="entry name" value="PECTIN LYASE SUPERFAMILY PROTEIN-RELATED"/>
    <property type="match status" value="1"/>
</dbReference>
<dbReference type="Pfam" id="PF00295">
    <property type="entry name" value="Glyco_hydro_28"/>
    <property type="match status" value="1"/>
</dbReference>
<dbReference type="SUPFAM" id="SSF51126">
    <property type="entry name" value="Pectin lyase-like"/>
    <property type="match status" value="1"/>
</dbReference>
<feature type="signal peptide" evidence="2">
    <location>
        <begin position="1"/>
        <end position="19"/>
    </location>
</feature>
<feature type="chain" id="PRO_0000394384" description="Probable rhamnogalacturonase A">
    <location>
        <begin position="20"/>
        <end position="467"/>
    </location>
</feature>
<feature type="active site" description="Proton donor" evidence="1">
    <location>
        <position position="217"/>
    </location>
</feature>
<feature type="active site" evidence="1">
    <location>
        <position position="292"/>
    </location>
</feature>
<feature type="glycosylation site" description="N-linked (GlcNAc...) asparagine" evidence="2">
    <location>
        <position position="237"/>
    </location>
</feature>
<feature type="glycosylation site" description="N-linked (GlcNAc...) asparagine" evidence="2">
    <location>
        <position position="252"/>
    </location>
</feature>
<feature type="glycosylation site" description="N-linked (GlcNAc...) asparagine" evidence="2">
    <location>
        <position position="319"/>
    </location>
</feature>
<feature type="disulfide bond" evidence="1">
    <location>
        <begin position="40"/>
        <end position="66"/>
    </location>
</feature>
<feature type="disulfide bond" evidence="1">
    <location>
        <begin position="219"/>
        <end position="236"/>
    </location>
</feature>
<feature type="disulfide bond" evidence="1">
    <location>
        <begin position="342"/>
        <end position="348"/>
    </location>
</feature>
<feature type="disulfide bond" evidence="1">
    <location>
        <begin position="370"/>
        <end position="379"/>
    </location>
</feature>
<accession>Q2U293</accession>
<gene>
    <name type="primary">rhgA</name>
    <name type="ORF">AO090038000552</name>
</gene>
<keyword id="KW-0119">Carbohydrate metabolism</keyword>
<keyword id="KW-0961">Cell wall biogenesis/degradation</keyword>
<keyword id="KW-1015">Disulfide bond</keyword>
<keyword id="KW-0325">Glycoprotein</keyword>
<keyword id="KW-0326">Glycosidase</keyword>
<keyword id="KW-0378">Hydrolase</keyword>
<keyword id="KW-0624">Polysaccharide degradation</keyword>
<keyword id="KW-1185">Reference proteome</keyword>
<keyword id="KW-0964">Secreted</keyword>
<keyword id="KW-0732">Signal</keyword>
<proteinExistence type="inferred from homology"/>
<organism>
    <name type="scientific">Aspergillus oryzae (strain ATCC 42149 / RIB 40)</name>
    <name type="common">Yellow koji mold</name>
    <dbReference type="NCBI Taxonomy" id="510516"/>
    <lineage>
        <taxon>Eukaryota</taxon>
        <taxon>Fungi</taxon>
        <taxon>Dikarya</taxon>
        <taxon>Ascomycota</taxon>
        <taxon>Pezizomycotina</taxon>
        <taxon>Eurotiomycetes</taxon>
        <taxon>Eurotiomycetidae</taxon>
        <taxon>Eurotiales</taxon>
        <taxon>Aspergillaceae</taxon>
        <taxon>Aspergillus</taxon>
        <taxon>Aspergillus subgen. Circumdati</taxon>
    </lineage>
</organism>
<name>RHGA_ASPOR</name>
<sequence length="467" mass="49455">MHSLSLISLALLSPLLVNAQLSGHVGPLTSSSSKASTKTCNVQDYGAKADKETDIGSAIEKAWDDCAEGGVVYIPSGDYAMFSRLKLSGGKASAIQLDGIIYRTGSDGGNLFMIEHSSDFEFFSSTSQGAIQGLGYEFHKDGSLNGPRLLRFYDVTDFSVHDVALVDSPAFHLSLDTCKNAEIYNMAIRGGDSGGLDGVDIWSENVWVHDVEVTNKDECVTVKSPAKNILVENIYCNWSGGCAMGSLGADTNISDVVYRNVYTWKSNQMYMIKSNGGSGSVSNLVLENFIGHGNAYSLDIDGEWSSMSTVSGDGVQLNNITVRNWKGTEEDGAARGPIKVVCAEKAPCTDITIDDFALWTESGDEQTYSCENGFGSGFCLQDGDGTSSYSTVITETAAPTGYEASSMSNDLSTAFGTDASIPIPTIPTSFFPGATPYSALAGAASGNAAKATSSATASRFRHRRGSH</sequence>
<protein>
    <recommendedName>
        <fullName>Probable rhamnogalacturonase A</fullName>
        <shortName>RGase A</shortName>
        <shortName>RHG A</shortName>
        <ecNumber>3.2.1.171</ecNumber>
    </recommendedName>
</protein>